<gene>
    <name evidence="1" type="primary">rplN</name>
    <name type="ordered locus">Psyc_0499</name>
</gene>
<protein>
    <recommendedName>
        <fullName evidence="1">Large ribosomal subunit protein uL14</fullName>
    </recommendedName>
    <alternativeName>
        <fullName evidence="2">50S ribosomal protein L14</fullName>
    </alternativeName>
</protein>
<comment type="function">
    <text evidence="1">Binds to 23S rRNA. Forms part of two intersubunit bridges in the 70S ribosome.</text>
</comment>
<comment type="subunit">
    <text evidence="1">Part of the 50S ribosomal subunit. Forms a cluster with proteins L3 and L19. In the 70S ribosome, L14 and L19 interact and together make contacts with the 16S rRNA in bridges B5 and B8.</text>
</comment>
<comment type="similarity">
    <text evidence="1">Belongs to the universal ribosomal protein uL14 family.</text>
</comment>
<accession>Q4FUE6</accession>
<organism>
    <name type="scientific">Psychrobacter arcticus (strain DSM 17307 / VKM B-2377 / 273-4)</name>
    <dbReference type="NCBI Taxonomy" id="259536"/>
    <lineage>
        <taxon>Bacteria</taxon>
        <taxon>Pseudomonadati</taxon>
        <taxon>Pseudomonadota</taxon>
        <taxon>Gammaproteobacteria</taxon>
        <taxon>Moraxellales</taxon>
        <taxon>Moraxellaceae</taxon>
        <taxon>Psychrobacter</taxon>
    </lineage>
</organism>
<evidence type="ECO:0000255" key="1">
    <source>
        <dbReference type="HAMAP-Rule" id="MF_01367"/>
    </source>
</evidence>
<evidence type="ECO:0000305" key="2"/>
<name>RL14_PSYA2</name>
<sequence>MIQVESMLEVADNSGARRVQCIKVLGGSHRRYASVGDIIKVTVKEAIPRGRVKKGDVMNAVVVRTKKGVRRPDGSVLRFDDNAAVLLNQNKAPIATRIFGPVTRELRGDQFMKIVSLAPEVL</sequence>
<keyword id="KW-1185">Reference proteome</keyword>
<keyword id="KW-0687">Ribonucleoprotein</keyword>
<keyword id="KW-0689">Ribosomal protein</keyword>
<keyword id="KW-0694">RNA-binding</keyword>
<keyword id="KW-0699">rRNA-binding</keyword>
<proteinExistence type="inferred from homology"/>
<reference key="1">
    <citation type="journal article" date="2010" name="Appl. Environ. Microbiol.">
        <title>The genome sequence of Psychrobacter arcticus 273-4, a psychroactive Siberian permafrost bacterium, reveals mechanisms for adaptation to low-temperature growth.</title>
        <authorList>
            <person name="Ayala-del-Rio H.L."/>
            <person name="Chain P.S."/>
            <person name="Grzymski J.J."/>
            <person name="Ponder M.A."/>
            <person name="Ivanova N."/>
            <person name="Bergholz P.W."/>
            <person name="Di Bartolo G."/>
            <person name="Hauser L."/>
            <person name="Land M."/>
            <person name="Bakermans C."/>
            <person name="Rodrigues D."/>
            <person name="Klappenbach J."/>
            <person name="Zarka D."/>
            <person name="Larimer F."/>
            <person name="Richardson P."/>
            <person name="Murray A."/>
            <person name="Thomashow M."/>
            <person name="Tiedje J.M."/>
        </authorList>
    </citation>
    <scope>NUCLEOTIDE SEQUENCE [LARGE SCALE GENOMIC DNA]</scope>
    <source>
        <strain>DSM 17307 / VKM B-2377 / 273-4</strain>
    </source>
</reference>
<feature type="chain" id="PRO_0000266532" description="Large ribosomal subunit protein uL14">
    <location>
        <begin position="1"/>
        <end position="122"/>
    </location>
</feature>
<dbReference type="EMBL" id="CP000082">
    <property type="protein sequence ID" value="AAZ18362.1"/>
    <property type="molecule type" value="Genomic_DNA"/>
</dbReference>
<dbReference type="RefSeq" id="WP_010196702.1">
    <property type="nucleotide sequence ID" value="NC_007204.1"/>
</dbReference>
<dbReference type="SMR" id="Q4FUE6"/>
<dbReference type="STRING" id="259536.Psyc_0499"/>
<dbReference type="GeneID" id="60255477"/>
<dbReference type="KEGG" id="par:Psyc_0499"/>
<dbReference type="eggNOG" id="COG0093">
    <property type="taxonomic scope" value="Bacteria"/>
</dbReference>
<dbReference type="HOGENOM" id="CLU_095071_2_1_6"/>
<dbReference type="OrthoDB" id="9806379at2"/>
<dbReference type="Proteomes" id="UP000000546">
    <property type="component" value="Chromosome"/>
</dbReference>
<dbReference type="GO" id="GO:0022625">
    <property type="term" value="C:cytosolic large ribosomal subunit"/>
    <property type="evidence" value="ECO:0007669"/>
    <property type="project" value="TreeGrafter"/>
</dbReference>
<dbReference type="GO" id="GO:0070180">
    <property type="term" value="F:large ribosomal subunit rRNA binding"/>
    <property type="evidence" value="ECO:0007669"/>
    <property type="project" value="TreeGrafter"/>
</dbReference>
<dbReference type="GO" id="GO:0003735">
    <property type="term" value="F:structural constituent of ribosome"/>
    <property type="evidence" value="ECO:0007669"/>
    <property type="project" value="InterPro"/>
</dbReference>
<dbReference type="GO" id="GO:0006412">
    <property type="term" value="P:translation"/>
    <property type="evidence" value="ECO:0007669"/>
    <property type="project" value="UniProtKB-UniRule"/>
</dbReference>
<dbReference type="CDD" id="cd00337">
    <property type="entry name" value="Ribosomal_uL14"/>
    <property type="match status" value="1"/>
</dbReference>
<dbReference type="FunFam" id="2.40.150.20:FF:000001">
    <property type="entry name" value="50S ribosomal protein L14"/>
    <property type="match status" value="1"/>
</dbReference>
<dbReference type="Gene3D" id="2.40.150.20">
    <property type="entry name" value="Ribosomal protein L14"/>
    <property type="match status" value="1"/>
</dbReference>
<dbReference type="HAMAP" id="MF_01367">
    <property type="entry name" value="Ribosomal_uL14"/>
    <property type="match status" value="1"/>
</dbReference>
<dbReference type="InterPro" id="IPR000218">
    <property type="entry name" value="Ribosomal_uL14"/>
</dbReference>
<dbReference type="InterPro" id="IPR005745">
    <property type="entry name" value="Ribosomal_uL14_bac-type"/>
</dbReference>
<dbReference type="InterPro" id="IPR019972">
    <property type="entry name" value="Ribosomal_uL14_CS"/>
</dbReference>
<dbReference type="InterPro" id="IPR036853">
    <property type="entry name" value="Ribosomal_uL14_sf"/>
</dbReference>
<dbReference type="NCBIfam" id="TIGR01067">
    <property type="entry name" value="rplN_bact"/>
    <property type="match status" value="1"/>
</dbReference>
<dbReference type="PANTHER" id="PTHR11761">
    <property type="entry name" value="50S/60S RIBOSOMAL PROTEIN L14/L23"/>
    <property type="match status" value="1"/>
</dbReference>
<dbReference type="PANTHER" id="PTHR11761:SF3">
    <property type="entry name" value="LARGE RIBOSOMAL SUBUNIT PROTEIN UL14M"/>
    <property type="match status" value="1"/>
</dbReference>
<dbReference type="Pfam" id="PF00238">
    <property type="entry name" value="Ribosomal_L14"/>
    <property type="match status" value="1"/>
</dbReference>
<dbReference type="SMART" id="SM01374">
    <property type="entry name" value="Ribosomal_L14"/>
    <property type="match status" value="1"/>
</dbReference>
<dbReference type="SUPFAM" id="SSF50193">
    <property type="entry name" value="Ribosomal protein L14"/>
    <property type="match status" value="1"/>
</dbReference>
<dbReference type="PROSITE" id="PS00049">
    <property type="entry name" value="RIBOSOMAL_L14"/>
    <property type="match status" value="1"/>
</dbReference>